<proteinExistence type="evidence at protein level"/>
<dbReference type="EMBL" id="AF102855">
    <property type="protein sequence ID" value="AAD04569.2"/>
    <property type="molecule type" value="mRNA"/>
</dbReference>
<dbReference type="EMBL" id="AF131951">
    <property type="protein sequence ID" value="AAD29417.1"/>
    <property type="status" value="ALT_INIT"/>
    <property type="molecule type" value="mRNA"/>
</dbReference>
<dbReference type="EMBL" id="AF159046">
    <property type="protein sequence ID" value="AAD42975.1"/>
    <property type="molecule type" value="mRNA"/>
</dbReference>
<dbReference type="EMBL" id="AF141904">
    <property type="protein sequence ID" value="AAF02498.1"/>
    <property type="status" value="ALT_INIT"/>
    <property type="molecule type" value="mRNA"/>
</dbReference>
<dbReference type="RefSeq" id="NP_113939.2">
    <molecule id="Q9WV48-1"/>
    <property type="nucleotide sequence ID" value="NM_031751.4"/>
</dbReference>
<dbReference type="RefSeq" id="XP_017445247.1">
    <property type="nucleotide sequence ID" value="XM_017589758.1"/>
</dbReference>
<dbReference type="RefSeq" id="XP_017445248.1">
    <property type="nucleotide sequence ID" value="XM_017589759.1"/>
</dbReference>
<dbReference type="RefSeq" id="XP_017445249.1">
    <molecule id="Q9WV48-3"/>
    <property type="nucleotide sequence ID" value="XM_017589760.3"/>
</dbReference>
<dbReference type="RefSeq" id="XP_017445250.1">
    <molecule id="Q9WV48-5"/>
    <property type="nucleotide sequence ID" value="XM_017589761.3"/>
</dbReference>
<dbReference type="RefSeq" id="XP_038947694.1">
    <molecule id="Q9WV48-2"/>
    <property type="nucleotide sequence ID" value="XM_039091766.2"/>
</dbReference>
<dbReference type="RefSeq" id="XP_063131003.1">
    <molecule id="Q9WV48-4"/>
    <property type="nucleotide sequence ID" value="XM_063274933.1"/>
</dbReference>
<dbReference type="PDB" id="1Q3O">
    <property type="method" value="X-ray"/>
    <property type="resolution" value="1.80 A"/>
    <property type="chains" value="A/B=654-762"/>
</dbReference>
<dbReference type="PDB" id="1Q3P">
    <property type="method" value="X-ray"/>
    <property type="resolution" value="2.25 A"/>
    <property type="chains" value="A/B=654-762"/>
</dbReference>
<dbReference type="PDB" id="3L4F">
    <property type="method" value="X-ray"/>
    <property type="resolution" value="2.80 A"/>
    <property type="chains" value="D=653-765"/>
</dbReference>
<dbReference type="PDB" id="3QJM">
    <property type="method" value="X-ray"/>
    <property type="resolution" value="2.31 A"/>
    <property type="chains" value="A/B=654-768"/>
</dbReference>
<dbReference type="PDB" id="3QJN">
    <property type="method" value="X-ray"/>
    <property type="resolution" value="2.71 A"/>
    <property type="chains" value="A/B/C/D/E/F/G/H=654-768"/>
</dbReference>
<dbReference type="PDB" id="7A9B">
    <property type="method" value="X-ray"/>
    <property type="resolution" value="2.00 A"/>
    <property type="chains" value="A/B=654-763"/>
</dbReference>
<dbReference type="PDBsum" id="1Q3O"/>
<dbReference type="PDBsum" id="1Q3P"/>
<dbReference type="PDBsum" id="3L4F"/>
<dbReference type="PDBsum" id="3QJM"/>
<dbReference type="PDBsum" id="3QJN"/>
<dbReference type="PDBsum" id="7A9B"/>
<dbReference type="SMR" id="Q9WV48"/>
<dbReference type="BioGRID" id="249365">
    <property type="interactions" value="9"/>
</dbReference>
<dbReference type="CORUM" id="Q9WV48"/>
<dbReference type="ELM" id="Q9WV48"/>
<dbReference type="FunCoup" id="Q9WV48">
    <property type="interactions" value="1328"/>
</dbReference>
<dbReference type="IntAct" id="Q9WV48">
    <property type="interactions" value="21"/>
</dbReference>
<dbReference type="MINT" id="Q9WV48"/>
<dbReference type="STRING" id="10116.ENSRNOP00000026100"/>
<dbReference type="GlyGen" id="Q9WV48">
    <property type="glycosylation" value="12 sites, 1 O-linked glycan (1 site)"/>
</dbReference>
<dbReference type="iPTMnet" id="Q9WV48"/>
<dbReference type="PhosphoSitePlus" id="Q9WV48"/>
<dbReference type="PaxDb" id="10116-ENSRNOP00000026100"/>
<dbReference type="ABCD" id="Q9WV48">
    <property type="antibodies" value="3 sequenced antibodies"/>
</dbReference>
<dbReference type="Ensembl" id="ENSRNOT00000026100.6">
    <molecule id="Q9WV48-1"/>
    <property type="protein sequence ID" value="ENSRNOP00000026100.3"/>
    <property type="gene ID" value="ENSRNOG00000019207.9"/>
</dbReference>
<dbReference type="Ensembl" id="ENSRNOT00000044257.6">
    <molecule id="Q9WV48-3"/>
    <property type="protein sequence ID" value="ENSRNOP00000039860.3"/>
    <property type="gene ID" value="ENSRNOG00000019207.9"/>
</dbReference>
<dbReference type="Ensembl" id="ENSRNOT00000092327.2">
    <molecule id="Q9WV48-4"/>
    <property type="protein sequence ID" value="ENSRNOP00000075838.1"/>
    <property type="gene ID" value="ENSRNOG00000019207.9"/>
</dbReference>
<dbReference type="Ensembl" id="ENSRNOT00000104599.1">
    <molecule id="Q9WV48-2"/>
    <property type="protein sequence ID" value="ENSRNOP00000084101.1"/>
    <property type="gene ID" value="ENSRNOG00000019207.9"/>
</dbReference>
<dbReference type="GeneID" id="78957"/>
<dbReference type="KEGG" id="rno:78957"/>
<dbReference type="UCSC" id="RGD:621011">
    <molecule id="Q9WV48-1"/>
    <property type="organism name" value="rat"/>
</dbReference>
<dbReference type="AGR" id="RGD:621011"/>
<dbReference type="CTD" id="50944"/>
<dbReference type="RGD" id="621011">
    <property type="gene designation" value="Shank1"/>
</dbReference>
<dbReference type="eggNOG" id="KOG0504">
    <property type="taxonomic scope" value="Eukaryota"/>
</dbReference>
<dbReference type="eggNOG" id="KOG4375">
    <property type="taxonomic scope" value="Eukaryota"/>
</dbReference>
<dbReference type="GeneTree" id="ENSGT00940000153561"/>
<dbReference type="HOGENOM" id="CLU_001824_1_0_1"/>
<dbReference type="InParanoid" id="Q9WV48"/>
<dbReference type="OMA" id="VRFMENC"/>
<dbReference type="OrthoDB" id="445896at2759"/>
<dbReference type="PhylomeDB" id="Q9WV48"/>
<dbReference type="Reactome" id="R-RNO-6794361">
    <property type="pathway name" value="Neurexins and neuroligins"/>
</dbReference>
<dbReference type="EvolutionaryTrace" id="Q9WV48"/>
<dbReference type="PRO" id="PR:Q9WV48"/>
<dbReference type="Proteomes" id="UP000002494">
    <property type="component" value="Chromosome 1"/>
</dbReference>
<dbReference type="Bgee" id="ENSRNOG00000019207">
    <property type="expression patterns" value="Expressed in frontal cortex and 4 other cell types or tissues"/>
</dbReference>
<dbReference type="GO" id="GO:0005829">
    <property type="term" value="C:cytosol"/>
    <property type="evidence" value="ECO:0000304"/>
    <property type="project" value="Reactome"/>
</dbReference>
<dbReference type="GO" id="GO:0030425">
    <property type="term" value="C:dendrite"/>
    <property type="evidence" value="ECO:0000266"/>
    <property type="project" value="RGD"/>
</dbReference>
<dbReference type="GO" id="GO:0043197">
    <property type="term" value="C:dendritic spine"/>
    <property type="evidence" value="ECO:0000314"/>
    <property type="project" value="BHF-UCL"/>
</dbReference>
<dbReference type="GO" id="GO:0060076">
    <property type="term" value="C:excitatory synapse"/>
    <property type="evidence" value="ECO:0000250"/>
    <property type="project" value="BHF-UCL"/>
</dbReference>
<dbReference type="GO" id="GO:0098978">
    <property type="term" value="C:glutamatergic synapse"/>
    <property type="evidence" value="ECO:0000266"/>
    <property type="project" value="RGD"/>
</dbReference>
<dbReference type="GO" id="GO:0016020">
    <property type="term" value="C:membrane"/>
    <property type="evidence" value="ECO:0000266"/>
    <property type="project" value="RGD"/>
</dbReference>
<dbReference type="GO" id="GO:0043005">
    <property type="term" value="C:neuron projection"/>
    <property type="evidence" value="ECO:0000250"/>
    <property type="project" value="BHF-UCL"/>
</dbReference>
<dbReference type="GO" id="GO:0005886">
    <property type="term" value="C:plasma membrane"/>
    <property type="evidence" value="ECO:0000250"/>
    <property type="project" value="BHF-UCL"/>
</dbReference>
<dbReference type="GO" id="GO:0014069">
    <property type="term" value="C:postsynaptic density"/>
    <property type="evidence" value="ECO:0000314"/>
    <property type="project" value="BHF-UCL"/>
</dbReference>
<dbReference type="GO" id="GO:0045211">
    <property type="term" value="C:postsynaptic membrane"/>
    <property type="evidence" value="ECO:0000314"/>
    <property type="project" value="RGD"/>
</dbReference>
<dbReference type="GO" id="GO:0098685">
    <property type="term" value="C:Schaffer collateral - CA1 synapse"/>
    <property type="evidence" value="ECO:0000266"/>
    <property type="project" value="RGD"/>
</dbReference>
<dbReference type="GO" id="GO:0045202">
    <property type="term" value="C:synapse"/>
    <property type="evidence" value="ECO:0000314"/>
    <property type="project" value="BHF-UCL"/>
</dbReference>
<dbReference type="GO" id="GO:0071532">
    <property type="term" value="F:ankyrin repeat binding"/>
    <property type="evidence" value="ECO:0000353"/>
    <property type="project" value="BHF-UCL"/>
</dbReference>
<dbReference type="GO" id="GO:0001664">
    <property type="term" value="F:G protein-coupled receptor binding"/>
    <property type="evidence" value="ECO:0000353"/>
    <property type="project" value="RGD"/>
</dbReference>
<dbReference type="GO" id="GO:0042802">
    <property type="term" value="F:identical protein binding"/>
    <property type="evidence" value="ECO:0000353"/>
    <property type="project" value="BHF-UCL"/>
</dbReference>
<dbReference type="GO" id="GO:0035255">
    <property type="term" value="F:ionotropic glutamate receptor binding"/>
    <property type="evidence" value="ECO:0000353"/>
    <property type="project" value="RGD"/>
</dbReference>
<dbReference type="GO" id="GO:0044877">
    <property type="term" value="F:protein-containing complex binding"/>
    <property type="evidence" value="ECO:0000353"/>
    <property type="project" value="RGD"/>
</dbReference>
<dbReference type="GO" id="GO:0097110">
    <property type="term" value="F:scaffold protein binding"/>
    <property type="evidence" value="ECO:0000353"/>
    <property type="project" value="BHF-UCL"/>
</dbReference>
<dbReference type="GO" id="GO:0017124">
    <property type="term" value="F:SH3 domain binding"/>
    <property type="evidence" value="ECO:0000353"/>
    <property type="project" value="BHF-UCL"/>
</dbReference>
<dbReference type="GO" id="GO:0030159">
    <property type="term" value="F:signaling receptor complex adaptor activity"/>
    <property type="evidence" value="ECO:0000314"/>
    <property type="project" value="RGD"/>
</dbReference>
<dbReference type="GO" id="GO:0031877">
    <property type="term" value="F:somatostatin receptor binding"/>
    <property type="evidence" value="ECO:0000353"/>
    <property type="project" value="UniProtKB"/>
</dbReference>
<dbReference type="GO" id="GO:0098919">
    <property type="term" value="F:structural constituent of postsynaptic density"/>
    <property type="evidence" value="ECO:0000266"/>
    <property type="project" value="RGD"/>
</dbReference>
<dbReference type="GO" id="GO:0030160">
    <property type="term" value="F:synaptic receptor adaptor activity"/>
    <property type="evidence" value="ECO:0000314"/>
    <property type="project" value="BHF-UCL"/>
</dbReference>
<dbReference type="GO" id="GO:0030534">
    <property type="term" value="P:adult behavior"/>
    <property type="evidence" value="ECO:0000266"/>
    <property type="project" value="RGD"/>
</dbReference>
<dbReference type="GO" id="GO:0098990">
    <property type="term" value="P:AMPA selective glutamate receptor signaling pathway"/>
    <property type="evidence" value="ECO:0000250"/>
    <property type="project" value="BHF-UCL"/>
</dbReference>
<dbReference type="GO" id="GO:0008306">
    <property type="term" value="P:associative learning"/>
    <property type="evidence" value="ECO:0000250"/>
    <property type="project" value="BHF-UCL"/>
</dbReference>
<dbReference type="GO" id="GO:0060997">
    <property type="term" value="P:dendritic spine morphogenesis"/>
    <property type="evidence" value="ECO:0000250"/>
    <property type="project" value="BHF-UCL"/>
</dbReference>
<dbReference type="GO" id="GO:0050894">
    <property type="term" value="P:determination of affect"/>
    <property type="evidence" value="ECO:0000266"/>
    <property type="project" value="RGD"/>
</dbReference>
<dbReference type="GO" id="GO:0046959">
    <property type="term" value="P:habituation"/>
    <property type="evidence" value="ECO:0000266"/>
    <property type="project" value="RGD"/>
</dbReference>
<dbReference type="GO" id="GO:0007616">
    <property type="term" value="P:long-term memory"/>
    <property type="evidence" value="ECO:0000250"/>
    <property type="project" value="BHF-UCL"/>
</dbReference>
<dbReference type="GO" id="GO:0050804">
    <property type="term" value="P:modulation of chemical synaptic transmission"/>
    <property type="evidence" value="ECO:0000266"/>
    <property type="project" value="RGD"/>
</dbReference>
<dbReference type="GO" id="GO:0032232">
    <property type="term" value="P:negative regulation of actin filament bundle assembly"/>
    <property type="evidence" value="ECO:0000250"/>
    <property type="project" value="BHF-UCL"/>
</dbReference>
<dbReference type="GO" id="GO:0050885">
    <property type="term" value="P:neuromuscular process controlling balance"/>
    <property type="evidence" value="ECO:0000250"/>
    <property type="project" value="BHF-UCL"/>
</dbReference>
<dbReference type="GO" id="GO:0042048">
    <property type="term" value="P:olfactory behavior"/>
    <property type="evidence" value="ECO:0000266"/>
    <property type="project" value="RGD"/>
</dbReference>
<dbReference type="GO" id="GO:0060999">
    <property type="term" value="P:positive regulation of dendritic spine development"/>
    <property type="evidence" value="ECO:0000314"/>
    <property type="project" value="UniProtKB"/>
</dbReference>
<dbReference type="GO" id="GO:2000463">
    <property type="term" value="P:positive regulation of excitatory postsynaptic potential"/>
    <property type="evidence" value="ECO:0000250"/>
    <property type="project" value="BHF-UCL"/>
</dbReference>
<dbReference type="GO" id="GO:0035418">
    <property type="term" value="P:protein localization to synapse"/>
    <property type="evidence" value="ECO:0000250"/>
    <property type="project" value="BHF-UCL"/>
</dbReference>
<dbReference type="GO" id="GO:0065003">
    <property type="term" value="P:protein-containing complex assembly"/>
    <property type="evidence" value="ECO:0000314"/>
    <property type="project" value="BHF-UCL"/>
</dbReference>
<dbReference type="GO" id="GO:0060013">
    <property type="term" value="P:righting reflex"/>
    <property type="evidence" value="ECO:0000266"/>
    <property type="project" value="RGD"/>
</dbReference>
<dbReference type="GO" id="GO:0035176">
    <property type="term" value="P:social behavior"/>
    <property type="evidence" value="ECO:0000266"/>
    <property type="project" value="RGD"/>
</dbReference>
<dbReference type="GO" id="GO:0060074">
    <property type="term" value="P:synapse maturation"/>
    <property type="evidence" value="ECO:0000314"/>
    <property type="project" value="UniProtKB"/>
</dbReference>
<dbReference type="GO" id="GO:0071625">
    <property type="term" value="P:vocalization behavior"/>
    <property type="evidence" value="ECO:0000266"/>
    <property type="project" value="RGD"/>
</dbReference>
<dbReference type="CDD" id="cd17175">
    <property type="entry name" value="FERM_F0_SHANK1"/>
    <property type="match status" value="1"/>
</dbReference>
<dbReference type="CDD" id="cd06746">
    <property type="entry name" value="PDZ_SHANK1_3-like"/>
    <property type="match status" value="1"/>
</dbReference>
<dbReference type="CDD" id="cd09506">
    <property type="entry name" value="SAM_Shank1_2_3"/>
    <property type="match status" value="1"/>
</dbReference>
<dbReference type="FunFam" id="1.25.40.20:FF:000063">
    <property type="entry name" value="SH3 and multiple ankyrin repeat domains protein 1"/>
    <property type="match status" value="1"/>
</dbReference>
<dbReference type="FunFam" id="3.10.20.90:FF:000029">
    <property type="entry name" value="SH3 and multiple ankyrin repeat domains protein 1"/>
    <property type="match status" value="1"/>
</dbReference>
<dbReference type="FunFam" id="1.10.150.50:FF:000006">
    <property type="entry name" value="SH3 and multiple ankyrin repeat domains protein 2"/>
    <property type="match status" value="1"/>
</dbReference>
<dbReference type="FunFam" id="2.30.30.40:FF:000025">
    <property type="entry name" value="SH3 and multiple ankyrin repeat domains protein 2"/>
    <property type="match status" value="1"/>
</dbReference>
<dbReference type="FunFam" id="2.30.42.10:FF:000018">
    <property type="entry name" value="SH3 and multiple ankyrin repeat domains protein 2"/>
    <property type="match status" value="1"/>
</dbReference>
<dbReference type="Gene3D" id="2.30.42.10">
    <property type="match status" value="1"/>
</dbReference>
<dbReference type="Gene3D" id="1.25.40.20">
    <property type="entry name" value="Ankyrin repeat-containing domain"/>
    <property type="match status" value="1"/>
</dbReference>
<dbReference type="Gene3D" id="3.10.20.90">
    <property type="entry name" value="Phosphatidylinositol 3-kinase Catalytic Subunit, Chain A, domain 1"/>
    <property type="match status" value="1"/>
</dbReference>
<dbReference type="Gene3D" id="2.30.30.40">
    <property type="entry name" value="SH3 Domains"/>
    <property type="match status" value="1"/>
</dbReference>
<dbReference type="Gene3D" id="1.10.150.50">
    <property type="entry name" value="Transcription Factor, Ets-1"/>
    <property type="match status" value="1"/>
</dbReference>
<dbReference type="InterPro" id="IPR002110">
    <property type="entry name" value="Ankyrin_rpt"/>
</dbReference>
<dbReference type="InterPro" id="IPR036770">
    <property type="entry name" value="Ankyrin_rpt-contain_sf"/>
</dbReference>
<dbReference type="InterPro" id="IPR001478">
    <property type="entry name" value="PDZ"/>
</dbReference>
<dbReference type="InterPro" id="IPR041489">
    <property type="entry name" value="PDZ_6"/>
</dbReference>
<dbReference type="InterPro" id="IPR036034">
    <property type="entry name" value="PDZ_sf"/>
</dbReference>
<dbReference type="InterPro" id="IPR001660">
    <property type="entry name" value="SAM"/>
</dbReference>
<dbReference type="InterPro" id="IPR013761">
    <property type="entry name" value="SAM/pointed_sf"/>
</dbReference>
<dbReference type="InterPro" id="IPR036028">
    <property type="entry name" value="SH3-like_dom_sf"/>
</dbReference>
<dbReference type="InterPro" id="IPR001452">
    <property type="entry name" value="SH3_domain"/>
</dbReference>
<dbReference type="InterPro" id="IPR051569">
    <property type="entry name" value="SHANK"/>
</dbReference>
<dbReference type="PANTHER" id="PTHR24135">
    <property type="entry name" value="SH3 AND MULTIPLE ANKYRIN REPEAT DOMAINS PROTEIN"/>
    <property type="match status" value="1"/>
</dbReference>
<dbReference type="PANTHER" id="PTHR24135:SF3">
    <property type="entry name" value="SH3 AND MULTIPLE ANKYRIN REPEAT DOMAINS PROTEIN 1"/>
    <property type="match status" value="1"/>
</dbReference>
<dbReference type="Pfam" id="PF12796">
    <property type="entry name" value="Ank_2"/>
    <property type="match status" value="2"/>
</dbReference>
<dbReference type="Pfam" id="PF17820">
    <property type="entry name" value="PDZ_6"/>
    <property type="match status" value="1"/>
</dbReference>
<dbReference type="Pfam" id="PF00536">
    <property type="entry name" value="SAM_1"/>
    <property type="match status" value="1"/>
</dbReference>
<dbReference type="Pfam" id="PF07653">
    <property type="entry name" value="SH3_2"/>
    <property type="match status" value="1"/>
</dbReference>
<dbReference type="SMART" id="SM00248">
    <property type="entry name" value="ANK"/>
    <property type="match status" value="6"/>
</dbReference>
<dbReference type="SMART" id="SM00228">
    <property type="entry name" value="PDZ"/>
    <property type="match status" value="1"/>
</dbReference>
<dbReference type="SMART" id="SM00454">
    <property type="entry name" value="SAM"/>
    <property type="match status" value="1"/>
</dbReference>
<dbReference type="SMART" id="SM00326">
    <property type="entry name" value="SH3"/>
    <property type="match status" value="1"/>
</dbReference>
<dbReference type="SUPFAM" id="SSF48403">
    <property type="entry name" value="Ankyrin repeat"/>
    <property type="match status" value="1"/>
</dbReference>
<dbReference type="SUPFAM" id="SSF50156">
    <property type="entry name" value="PDZ domain-like"/>
    <property type="match status" value="1"/>
</dbReference>
<dbReference type="SUPFAM" id="SSF47769">
    <property type="entry name" value="SAM/Pointed domain"/>
    <property type="match status" value="1"/>
</dbReference>
<dbReference type="SUPFAM" id="SSF50044">
    <property type="entry name" value="SH3-domain"/>
    <property type="match status" value="1"/>
</dbReference>
<dbReference type="PROSITE" id="PS50297">
    <property type="entry name" value="ANK_REP_REGION"/>
    <property type="match status" value="1"/>
</dbReference>
<dbReference type="PROSITE" id="PS50088">
    <property type="entry name" value="ANK_REPEAT"/>
    <property type="match status" value="3"/>
</dbReference>
<dbReference type="PROSITE" id="PS50106">
    <property type="entry name" value="PDZ"/>
    <property type="match status" value="1"/>
</dbReference>
<dbReference type="PROSITE" id="PS50105">
    <property type="entry name" value="SAM_DOMAIN"/>
    <property type="match status" value="1"/>
</dbReference>
<dbReference type="PROSITE" id="PS50002">
    <property type="entry name" value="SH3"/>
    <property type="match status" value="1"/>
</dbReference>
<evidence type="ECO:0000250" key="1"/>
<evidence type="ECO:0000250" key="2">
    <source>
        <dbReference type="UniProtKB" id="D3YZU1"/>
    </source>
</evidence>
<evidence type="ECO:0000255" key="3">
    <source>
        <dbReference type="PROSITE-ProRule" id="PRU00143"/>
    </source>
</evidence>
<evidence type="ECO:0000255" key="4">
    <source>
        <dbReference type="PROSITE-ProRule" id="PRU00184"/>
    </source>
</evidence>
<evidence type="ECO:0000255" key="5">
    <source>
        <dbReference type="PROSITE-ProRule" id="PRU00192"/>
    </source>
</evidence>
<evidence type="ECO:0000256" key="6">
    <source>
        <dbReference type="SAM" id="MobiDB-lite"/>
    </source>
</evidence>
<evidence type="ECO:0000269" key="7">
    <source>
    </source>
</evidence>
<evidence type="ECO:0000269" key="8">
    <source>
    </source>
</evidence>
<evidence type="ECO:0000269" key="9">
    <source>
    </source>
</evidence>
<evidence type="ECO:0000269" key="10">
    <source>
    </source>
</evidence>
<evidence type="ECO:0000269" key="11">
    <source>
    </source>
</evidence>
<evidence type="ECO:0000269" key="12">
    <source>
    </source>
</evidence>
<evidence type="ECO:0000269" key="13">
    <source>
    </source>
</evidence>
<evidence type="ECO:0000269" key="14">
    <source>
    </source>
</evidence>
<evidence type="ECO:0000269" key="15">
    <source>
    </source>
</evidence>
<evidence type="ECO:0000269" key="16">
    <source>
    </source>
</evidence>
<evidence type="ECO:0000269" key="17">
    <source>
    </source>
</evidence>
<evidence type="ECO:0000303" key="18">
    <source>
    </source>
</evidence>
<evidence type="ECO:0000303" key="19">
    <source>
    </source>
</evidence>
<evidence type="ECO:0000305" key="20"/>
<evidence type="ECO:0007744" key="21">
    <source>
    </source>
</evidence>
<evidence type="ECO:0007829" key="22">
    <source>
        <dbReference type="PDB" id="1Q3O"/>
    </source>
</evidence>
<evidence type="ECO:0007829" key="23">
    <source>
        <dbReference type="PDB" id="1Q3P"/>
    </source>
</evidence>
<evidence type="ECO:0007829" key="24">
    <source>
        <dbReference type="PDB" id="7A9B"/>
    </source>
</evidence>
<accession>Q9WV48</accession>
<accession>Q9QZZ8</accession>
<accession>Q9WU13</accession>
<accession>Q9WUE8</accession>
<gene>
    <name type="primary">Shank1</name>
</gene>
<sequence length="2167" mass="226335">MTHSPATSEDEERHSASECPEGGSESDSSPDGPGRGPQGTRGRGSGAPGNLASTRGLQGRSMSVPDDAHFSMMVFRIGIPDLHQTKCLRFNPDATIWTAKQQVLCALSESLQDVLNYGLFQPATSGRDANFLEEERLLREYPQSFEKGVPYLEFRYKTRVYKQTNLDEKQLAKLHTKTGLKKFLEYVQLGTSDKVARLLDKGLDPNYHDSDSGETPLTLAAQTEGSVEVIRTLCLGGAHIDFRARDGMTALHKAACARHCLALTALLDLGGSPNYKDRRGLTPLFHTAMVGGDPRCCELLLYNRAQLGIADENGWQEIHQACQRGHSQHLEHLLFYGAEPGAQNASGNTALHICALYNKETCARILLYRGANKDVKNNNGQTPFQVAVIAGNFELGELIRNHREQDVVPFQESPKYAARRRGPPGAGLTVPPALLRANSDTSMALPDWMVFSAPGASSSGTPGPTSGPQGQSQPSAPSTKLSSGTLRSASSPRGARARSPSRGRHPEDAKRQPRGRPSSSGTPRDGPAGGTGGSGGPGGSLGSRGRRRKLYSAVPGRSFMAVKSYQAQGEGEISLSKGEKIKVLSIGEGGFWEGQVKGRVGWFPSDCLEEVANRSQEGRQESRSDKAKRLFRHYTVGSYDSFDAPSLIDGIDSGSDYIIKEKTVLLQKKDSEGFGFVLRGAKAQTPIEEFTPTPAFPALQYLESVDEGGVAWRAGLRMGDFLIEVNGQNVVKVGHRQVVNMIRQGGNTLMVKVVMVTRHPDMDEAVHKKASQQAKRLPPPAISLRSKSMTSELEEMVSPWKKKIEYEQQPAAVPSMEKKRTVYQMALNKLDEILAAAQQTISASESPGPGGLASLGKHRPKGFFATESSFDPHHRSQPSYDRPSFLPPGPGLMLRQKSIGAAEDDRPYLAPPAMKFSRSLSVPGSEDIPPPPTTSPPEPPYSTPPAPSSSGRLTPSPRGGPFNPSSGGPLPASSPSSFDGPSPPDTRGGGREKSLYHSAALPPAHHHPPHHHHHHAPPPQPHHHHAHPPHPPEMETGGSPDDPPPRLALGPQPSLRGWRGGGPSPTSGAPSPSHHSSSGGSSGPTQAPALRYFQLPPRAASAAMYVPARSGRGRKGPLVKQTKVEGEPQKGSIPSASSPTSPALPRSEPPPAGPSEKNSIPIPTIIIKAPSTSSSGRSSQGSSTEAEPPTQPDGAGGGGSSPSPAPATSPVPPSPSPVPTPASPSGPATLDFTSQFGAALVGAARREGGWQNEARRRSTLFLSTDAGDEDGGDSGLGPGGPPGPRLRHSKSIDEGMFSAEPYLRLESGGSSGGYGAYAAGSRAYGGSGSSSAFTSFLPPRPLVHPLTGKALDPASPLGLALAARERALKESSEGGGTPQPPPRPPSPRYDAPPPTLHHHSPHSPHSPHARHEPVLRLWGDPARRELGYRAGLGSQEKALTASPPAARRSLLHRLPPTAPGVGPLLLQLGPEPPTPHPGVSKAWRTAAPEEPERLPLHVRFLENCQARPPPAGTRGSSTEDGPGVPPPSPRRVLPTSPTSPRGNEENGLPLLVLPPPAPSVDVDDGEFLFAEPLPPPLEFSNSFEKPESPLTPGPPHPLPDPPSPATPLPAAPPPAVAAAPPTLDSTASSLTSYDSEVATLTQGAPAAPGDPPAPGPPAPAAPAPPAPQPGPDPPPGTDSGIEEVDSRSSSDHPLETISSASTLSSLSAEGGGNTGGVAGGGAGVASGTELLDTYVAYLDGQAFGGSGTPGPPYPPQLMTPSKLRGRALGTSGNLRPGPSGGLRDPVTPTSPTVSVTGAGTDGLLALSACPGPSTAGVAGGPVAVEPEVPPVPLPAASSLPRKLLPWEEGPGPPPPPLPGPLSQPQASALATVKASIISELSSKLQQFGGSSTAGGALPWARGGSGGSTDSHHGGASYIPERTSSLQRQRLSEDSQTSLLSKPSSSIFQNWPKPPLPPLPTGSGVSSSTAAAPGATSPSASSASASTRHLQGVEFEMRPPLLRRAPSPSLLPASDHKVSPAPRPSSLPILPSGPIYPGLFDIRSSPTGGAGGSTDPFAPVFVPPHPGISGGLGGALSGASRSLSPTRLLSLPPDKPFGAKPLGFWTKFDVADWLEWLGLSEHRAQFLDHEIDGSHLPALTKEDYVDLGVTRVGHRMNIDRALKFFLER</sequence>
<comment type="function">
    <text evidence="12 16">Seems to be an adapter protein in the postsynaptic density (PSD) of excitatory synapses that interconnects receptors of the postsynaptic membrane including NMDA-type and metabotropic glutamate receptors, and the actin-based cytoskeleton. Plays a role in the structural and functional organization of the dendritic spine and synaptic junction. Overexpression promotes maturation of dendritic spines and the enlargement of spine heads via its ability to recruit Homer to postsynaptic sites, and enhances presynaptic function.</text>
</comment>
<comment type="subunit">
    <text evidence="1 7 8 9 11 13 14 15 17">May homomultimerize via its SAM domain. Interacts with the C-terminus of SSTR2 via the PDZ domain. Interacts with SHARPIN, SPTAN1 and DLGAP1/GKAP. Part of a complex with DLG4/PSD-95 and DLGAP1/GKAP. Interacts with BAIAP2 (By similarity). Interacts with IGSF9. Interacts with HOMER1 and HOMER3 (PubMed:19345194).</text>
</comment>
<comment type="interaction">
    <interactant intactId="EBI-80909">
        <id>Q9WV48</id>
    </interactant>
    <interactant intactId="EBI-375655">
        <id>P31016</id>
        <label>Dlg4</label>
    </interactant>
    <organismsDiffer>false</organismsDiffer>
    <experiments>3</experiments>
</comment>
<comment type="interaction">
    <interactant intactId="EBI-80909">
        <id>Q9WV48</id>
    </interactant>
    <interactant intactId="EBI-80901">
        <id>P97836</id>
        <label>Dlgap1</label>
    </interactant>
    <organismsDiffer>false</organismsDiffer>
    <experiments>7</experiments>
</comment>
<comment type="interaction">
    <interactant intactId="EBI-80909">
        <id>Q9WV48</id>
    </interactant>
    <interactant intactId="EBI-6269434">
        <id>P97836-5</id>
        <label>Dlgap1</label>
    </interactant>
    <organismsDiffer>false</organismsDiffer>
    <experiments>2</experiments>
</comment>
<comment type="interaction">
    <interactant intactId="EBI-80909">
        <id>Q9WV48</id>
    </interactant>
    <interactant intactId="EBI-80070">
        <id>P21575</id>
        <label>Dnm1</label>
    </interactant>
    <organismsDiffer>false</organismsDiffer>
    <experiments>2</experiments>
</comment>
<comment type="interaction">
    <interactant intactId="EBI-80909">
        <id>Q9WV48</id>
    </interactant>
    <interactant intactId="EBI-349613">
        <id>P39052</id>
        <label>Dnm2</label>
    </interactant>
    <organismsDiffer>false</organismsDiffer>
    <experiments>2</experiments>
</comment>
<comment type="interaction">
    <interactant intactId="EBI-80909">
        <id>Q9WV48</id>
    </interactant>
    <interactant intactId="EBI-2338999">
        <id>Q9Z214-2</id>
        <label>Homer1</label>
    </interactant>
    <organismsDiffer>false</organismsDiffer>
    <experiments>4</experiments>
</comment>
<comment type="interaction">
    <interactant intactId="EBI-80909">
        <id>Q9WV48</id>
    </interactant>
    <interactant intactId="EBI-1394695">
        <id>Q9EQL9</id>
        <label>Sharpin</label>
    </interactant>
    <organismsDiffer>false</organismsDiffer>
    <experiments>7</experiments>
</comment>
<comment type="interaction">
    <interactant intactId="EBI-80909">
        <id>Q9WV48</id>
    </interactant>
    <interactant intactId="EBI-8620514">
        <id>Q9ES28-2</id>
        <label>Arhgef7</label>
    </interactant>
    <organismsDiffer>true</organismsDiffer>
    <experiments>6</experiments>
</comment>
<comment type="interaction">
    <interactant intactId="EBI-80909">
        <id>Q9WV48</id>
    </interactant>
    <interactant intactId="EBI-2794106">
        <id>Q61625</id>
        <label>Grid2</label>
    </interactant>
    <organismsDiffer>true</organismsDiffer>
    <experiments>5</experiments>
</comment>
<comment type="subcellular location">
    <subcellularLocation>
        <location evidence="8">Cytoplasm</location>
    </subcellularLocation>
    <subcellularLocation>
        <location evidence="8">Synapse</location>
    </subcellularLocation>
    <subcellularLocation>
        <location evidence="8">Postsynaptic density</location>
    </subcellularLocation>
    <text>Colocalizes with alpha-latrotoxin receptor 1.</text>
</comment>
<comment type="alternative products">
    <event type="alternative splicing"/>
    <isoform>
        <id>Q9WV48-1</id>
        <name>1</name>
        <sequence type="displayed"/>
    </isoform>
    <isoform>
        <id>Q9WV48-2</id>
        <name>2</name>
        <sequence type="described" ref="VSP_006072 VSP_006073"/>
    </isoform>
    <isoform>
        <id>Q9WV48-3</id>
        <name>3</name>
        <sequence type="described" ref="VSP_006074"/>
    </isoform>
    <isoform>
        <id>Q9WV48-4</id>
        <name>4</name>
        <name>A</name>
        <sequence type="described" ref="VSP_006075"/>
    </isoform>
    <isoform>
        <id>Q9WV48-5</id>
        <name>5</name>
        <sequence type="described" ref="VSP_006076 VSP_006077"/>
    </isoform>
    <text>Additional isoforms seem to exist.</text>
</comment>
<comment type="tissue specificity">
    <text>Expressed only in brain (neuropil of cortex, CA1 region hippocampus and molecular layer of cerebellum).</text>
</comment>
<comment type="developmental stage">
    <text evidence="10">Expression increases from low levels at birth to high levels at 3-4 weeks before dropping slightly in adulthood. Expressed in the cortex and the molecular layer of the cerebellum at postnatal day 7. Isoform 2 expression does not change during development of both cortex and cerebellum. Isoform 4 expression decreases significantly during development of cortex but not cerebellum.</text>
</comment>
<comment type="similarity">
    <text evidence="20">Belongs to the SHANK family.</text>
</comment>
<comment type="sequence caution" evidence="20">
    <conflict type="erroneous initiation">
        <sequence resource="EMBL-CDS" id="AAD29417"/>
    </conflict>
</comment>
<comment type="sequence caution" evidence="20">
    <conflict type="erroneous initiation">
        <sequence resource="EMBL-CDS" id="AAF02498"/>
    </conflict>
</comment>
<organism>
    <name type="scientific">Rattus norvegicus</name>
    <name type="common">Rat</name>
    <dbReference type="NCBI Taxonomy" id="10116"/>
    <lineage>
        <taxon>Eukaryota</taxon>
        <taxon>Metazoa</taxon>
        <taxon>Chordata</taxon>
        <taxon>Craniata</taxon>
        <taxon>Vertebrata</taxon>
        <taxon>Euteleostomi</taxon>
        <taxon>Mammalia</taxon>
        <taxon>Eutheria</taxon>
        <taxon>Euarchontoglires</taxon>
        <taxon>Glires</taxon>
        <taxon>Rodentia</taxon>
        <taxon>Myomorpha</taxon>
        <taxon>Muroidea</taxon>
        <taxon>Muridae</taxon>
        <taxon>Murinae</taxon>
        <taxon>Rattus</taxon>
    </lineage>
</organism>
<feature type="chain" id="PRO_0000174672" description="SH3 and multiple ankyrin repeat domains protein 1">
    <location>
        <begin position="1"/>
        <end position="2167"/>
    </location>
</feature>
<feature type="repeat" description="ANK 1">
    <location>
        <begin position="195"/>
        <end position="210"/>
    </location>
</feature>
<feature type="repeat" description="ANK 2">
    <location>
        <begin position="212"/>
        <end position="245"/>
    </location>
</feature>
<feature type="repeat" description="ANK 3">
    <location>
        <begin position="246"/>
        <end position="278"/>
    </location>
</feature>
<feature type="repeat" description="ANK 4">
    <location>
        <begin position="279"/>
        <end position="312"/>
    </location>
</feature>
<feature type="repeat" description="ANK 5">
    <location>
        <begin position="313"/>
        <end position="345"/>
    </location>
</feature>
<feature type="repeat" description="ANK 6">
    <location>
        <begin position="346"/>
        <end position="378"/>
    </location>
</feature>
<feature type="repeat" description="ANK 7">
    <location>
        <begin position="379"/>
        <end position="395"/>
    </location>
</feature>
<feature type="domain" description="SH3" evidence="5">
    <location>
        <begin position="554"/>
        <end position="613"/>
    </location>
</feature>
<feature type="domain" description="PDZ" evidence="3">
    <location>
        <begin position="663"/>
        <end position="757"/>
    </location>
</feature>
<feature type="domain" description="SAM" evidence="4">
    <location>
        <begin position="2104"/>
        <end position="2167"/>
    </location>
</feature>
<feature type="region of interest" description="Disordered" evidence="6">
    <location>
        <begin position="1"/>
        <end position="63"/>
    </location>
</feature>
<feature type="region of interest" description="Disordered" evidence="6">
    <location>
        <begin position="413"/>
        <end position="432"/>
    </location>
</feature>
<feature type="region of interest" description="Disordered" evidence="6">
    <location>
        <begin position="453"/>
        <end position="546"/>
    </location>
</feature>
<feature type="region of interest" description="Disordered" evidence="6">
    <location>
        <begin position="841"/>
        <end position="894"/>
    </location>
</feature>
<feature type="region of interest" description="Disordered" evidence="6">
    <location>
        <begin position="917"/>
        <end position="1233"/>
    </location>
</feature>
<feature type="region of interest" description="Disordered" evidence="6">
    <location>
        <begin position="1245"/>
        <end position="1294"/>
    </location>
</feature>
<feature type="region of interest" description="Disordered" evidence="6">
    <location>
        <begin position="1308"/>
        <end position="1417"/>
    </location>
</feature>
<feature type="region of interest" description="Disordered" evidence="6">
    <location>
        <begin position="1429"/>
        <end position="1725"/>
    </location>
</feature>
<feature type="region of interest" description="Disordered" evidence="6">
    <location>
        <begin position="1740"/>
        <end position="1787"/>
    </location>
</feature>
<feature type="region of interest" description="Disordered" evidence="6">
    <location>
        <begin position="1842"/>
        <end position="1866"/>
    </location>
</feature>
<feature type="region of interest" description="Disordered" evidence="6">
    <location>
        <begin position="1898"/>
        <end position="1988"/>
    </location>
</feature>
<feature type="region of interest" description="Disordered" evidence="6">
    <location>
        <begin position="2002"/>
        <end position="2029"/>
    </location>
</feature>
<feature type="compositionally biased region" description="Low complexity" evidence="6">
    <location>
        <begin position="17"/>
        <end position="32"/>
    </location>
</feature>
<feature type="compositionally biased region" description="Gly residues" evidence="6">
    <location>
        <begin position="33"/>
        <end position="47"/>
    </location>
</feature>
<feature type="compositionally biased region" description="Low complexity" evidence="6">
    <location>
        <begin position="453"/>
        <end position="479"/>
    </location>
</feature>
<feature type="compositionally biased region" description="Gly residues" evidence="6">
    <location>
        <begin position="527"/>
        <end position="542"/>
    </location>
</feature>
<feature type="compositionally biased region" description="Pro residues" evidence="6">
    <location>
        <begin position="928"/>
        <end position="947"/>
    </location>
</feature>
<feature type="compositionally biased region" description="Low complexity" evidence="6">
    <location>
        <begin position="964"/>
        <end position="980"/>
    </location>
</feature>
<feature type="compositionally biased region" description="Basic residues" evidence="6">
    <location>
        <begin position="1004"/>
        <end position="1028"/>
    </location>
</feature>
<feature type="compositionally biased region" description="Low complexity" evidence="6">
    <location>
        <begin position="1064"/>
        <end position="1085"/>
    </location>
</feature>
<feature type="compositionally biased region" description="Low complexity" evidence="6">
    <location>
        <begin position="1132"/>
        <end position="1146"/>
    </location>
</feature>
<feature type="compositionally biased region" description="Low complexity" evidence="6">
    <location>
        <begin position="1171"/>
        <end position="1184"/>
    </location>
</feature>
<feature type="compositionally biased region" description="Pro residues" evidence="6">
    <location>
        <begin position="1203"/>
        <end position="1224"/>
    </location>
</feature>
<feature type="compositionally biased region" description="Basic and acidic residues" evidence="6">
    <location>
        <begin position="1245"/>
        <end position="1256"/>
    </location>
</feature>
<feature type="compositionally biased region" description="Basic and acidic residues" evidence="6">
    <location>
        <begin position="1363"/>
        <end position="1372"/>
    </location>
</feature>
<feature type="compositionally biased region" description="Pro residues" evidence="6">
    <location>
        <begin position="1378"/>
        <end position="1395"/>
    </location>
</feature>
<feature type="compositionally biased region" description="Basic residues" evidence="6">
    <location>
        <begin position="1396"/>
        <end position="1408"/>
    </location>
</feature>
<feature type="compositionally biased region" description="Low complexity" evidence="6">
    <location>
        <begin position="1459"/>
        <end position="1469"/>
    </location>
</feature>
<feature type="compositionally biased region" description="Low complexity" evidence="6">
    <location>
        <begin position="1530"/>
        <end position="1541"/>
    </location>
</feature>
<feature type="compositionally biased region" description="Pro residues" evidence="6">
    <location>
        <begin position="1589"/>
        <end position="1615"/>
    </location>
</feature>
<feature type="compositionally biased region" description="Polar residues" evidence="6">
    <location>
        <begin position="1624"/>
        <end position="1641"/>
    </location>
</feature>
<feature type="compositionally biased region" description="Pro residues" evidence="6">
    <location>
        <begin position="1648"/>
        <end position="1676"/>
    </location>
</feature>
<feature type="compositionally biased region" description="Basic and acidic residues" evidence="6">
    <location>
        <begin position="1684"/>
        <end position="1694"/>
    </location>
</feature>
<feature type="compositionally biased region" description="Low complexity" evidence="6">
    <location>
        <begin position="1695"/>
        <end position="1708"/>
    </location>
</feature>
<feature type="compositionally biased region" description="Gly residues" evidence="6">
    <location>
        <begin position="1709"/>
        <end position="1724"/>
    </location>
</feature>
<feature type="compositionally biased region" description="Pro residues" evidence="6">
    <location>
        <begin position="1850"/>
        <end position="1861"/>
    </location>
</feature>
<feature type="compositionally biased region" description="Low complexity" evidence="6">
    <location>
        <begin position="1934"/>
        <end position="1945"/>
    </location>
</feature>
<feature type="compositionally biased region" description="Low complexity" evidence="6">
    <location>
        <begin position="1960"/>
        <end position="1985"/>
    </location>
</feature>
<feature type="compositionally biased region" description="Low complexity" evidence="6">
    <location>
        <begin position="2002"/>
        <end position="2012"/>
    </location>
</feature>
<feature type="modified residue" description="Omega-N-methylarginine" evidence="2">
    <location>
        <position position="43"/>
    </location>
</feature>
<feature type="modified residue" description="Phosphotyrosine" evidence="2">
    <location>
        <position position="186"/>
    </location>
</feature>
<feature type="modified residue" description="Phosphoserine" evidence="21">
    <location>
        <position position="540"/>
    </location>
</feature>
<feature type="modified residue" description="Omega-N-methylarginine" evidence="2">
    <location>
        <position position="544"/>
    </location>
</feature>
<feature type="modified residue" description="Phosphoserine" evidence="2">
    <location>
        <position position="671"/>
    </location>
</feature>
<feature type="modified residue" description="Phosphoserine" evidence="2">
    <location>
        <position position="791"/>
    </location>
</feature>
<feature type="modified residue" description="Phosphoserine" evidence="21">
    <location>
        <position position="898"/>
    </location>
</feature>
<feature type="modified residue" description="Omega-N-methylarginine" evidence="2">
    <location>
        <position position="958"/>
    </location>
</feature>
<feature type="modified residue" description="Omega-N-methylarginine" evidence="2">
    <location>
        <position position="1059"/>
    </location>
</feature>
<feature type="modified residue" description="Omega-N-methylarginine" evidence="2">
    <location>
        <position position="1098"/>
    </location>
</feature>
<feature type="modified residue" description="Omega-N-methylarginine" evidence="2">
    <location>
        <position position="1109"/>
    </location>
</feature>
<feature type="modified residue" description="Asymmetric dimethylarginine" evidence="2">
    <location>
        <position position="1257"/>
    </location>
</feature>
<feature type="modified residue" description="Phosphoserine" evidence="21">
    <location>
        <position position="1291"/>
    </location>
</feature>
<feature type="modified residue" description="Omega-N-methylarginine" evidence="2">
    <location>
        <position position="1429"/>
    </location>
</feature>
<feature type="modified residue" description="Phosphoserine" evidence="21">
    <location>
        <position position="1442"/>
    </location>
</feature>
<feature type="modified residue" description="Omega-N-methylarginine" evidence="2">
    <location>
        <position position="1901"/>
    </location>
</feature>
<feature type="modified residue" description="Omega-N-methylarginine" evidence="2">
    <location>
        <position position="2022"/>
    </location>
</feature>
<feature type="modified residue" description="Omega-N-methylarginine" evidence="2">
    <location>
        <position position="2042"/>
    </location>
</feature>
<feature type="modified residue" description="Omega-N-methylarginine" evidence="2">
    <location>
        <position position="2080"/>
    </location>
</feature>
<feature type="splice variant" id="VSP_006072" description="In isoform 2." evidence="20">
    <location>
        <begin position="1"/>
        <end position="614"/>
    </location>
</feature>
<feature type="splice variant" id="VSP_006073" description="In isoform 2." evidence="20">
    <original>SQEGRQESRSDKAKRLFRHYTVGSYDSFDAPSLIDGIDSG</original>
    <variation>MALSAVGGGPGGGALPQPPPALSSSWPALGPRRRSVWYIY</variation>
    <location>
        <begin position="615"/>
        <end position="654"/>
    </location>
</feature>
<feature type="splice variant" id="VSP_006074" description="In isoform 3." evidence="19">
    <location>
        <begin position="646"/>
        <end position="654"/>
    </location>
</feature>
<feature type="splice variant" id="VSP_006075" description="In isoform 4." evidence="18">
    <location>
        <begin position="797"/>
        <end position="804"/>
    </location>
</feature>
<feature type="splice variant" id="VSP_006076" description="In isoform 5." evidence="20">
    <original>LSEDSQTSLLSKPS</original>
    <variation>QYRIVVKSSDFGDF</variation>
    <location>
        <begin position="1930"/>
        <end position="1943"/>
    </location>
</feature>
<feature type="splice variant" id="VSP_006077" description="In isoform 5." evidence="20">
    <location>
        <begin position="1944"/>
        <end position="2167"/>
    </location>
</feature>
<feature type="sequence conflict" description="In Ref. 1; AAD04569." evidence="20" ref="1">
    <original>S</original>
    <variation>T</variation>
    <location>
        <position position="1141"/>
    </location>
</feature>
<feature type="sequence conflict" description="In Ref. 2; AAD29417." evidence="20" ref="2">
    <original>S</original>
    <variation>N</variation>
    <location>
        <position position="1174"/>
    </location>
</feature>
<feature type="sequence conflict" description="In Ref. 1; AAD04569." evidence="20" ref="1">
    <original>R</original>
    <variation>K</variation>
    <location>
        <position position="1246"/>
    </location>
</feature>
<feature type="sequence conflict" description="In Ref. 1; AAD04569." evidence="20" ref="1">
    <original>A</original>
    <variation>T</variation>
    <location>
        <position position="1323"/>
    </location>
</feature>
<feature type="sequence conflict" description="In Ref. 1; AAD04569." evidence="20" ref="1">
    <original>S</original>
    <variation>D</variation>
    <location>
        <position position="1331"/>
    </location>
</feature>
<feature type="sequence conflict" description="In Ref. 2; AAD29417." evidence="20" ref="2">
    <original>S</original>
    <variation>N</variation>
    <location>
        <position position="1726"/>
    </location>
</feature>
<feature type="strand" evidence="22">
    <location>
        <begin position="657"/>
        <end position="667"/>
    </location>
</feature>
<feature type="strand" evidence="23">
    <location>
        <begin position="670"/>
        <end position="672"/>
    </location>
</feature>
<feature type="strand" evidence="22">
    <location>
        <begin position="675"/>
        <end position="682"/>
    </location>
</feature>
<feature type="helix" evidence="24">
    <location>
        <begin position="685"/>
        <end position="689"/>
    </location>
</feature>
<feature type="strand" evidence="23">
    <location>
        <begin position="694"/>
        <end position="696"/>
    </location>
</feature>
<feature type="strand" evidence="22">
    <location>
        <begin position="698"/>
        <end position="705"/>
    </location>
</feature>
<feature type="helix" evidence="22">
    <location>
        <begin position="710"/>
        <end position="713"/>
    </location>
</feature>
<feature type="strand" evidence="22">
    <location>
        <begin position="721"/>
        <end position="725"/>
    </location>
</feature>
<feature type="helix" evidence="22">
    <location>
        <begin position="735"/>
        <end position="744"/>
    </location>
</feature>
<feature type="turn" evidence="22">
    <location>
        <begin position="745"/>
        <end position="747"/>
    </location>
</feature>
<feature type="strand" evidence="22">
    <location>
        <begin position="748"/>
        <end position="757"/>
    </location>
</feature>
<feature type="modified residue" description="Phosphoserine" evidence="21">
    <location sequence="Q9WV48-3">
        <position position="638"/>
    </location>
</feature>
<feature type="modified residue" description="Phosphoserine" evidence="21">
    <location sequence="Q9WV48-3">
        <position position="641"/>
    </location>
</feature>
<reference key="1">
    <citation type="journal article" date="1999" name="J. Biol. Chem.">
        <title>Synamon, a novel neuronal protein interacting with synapse-associated protein 90/postsynaptic density-95-associated protein.</title>
        <authorList>
            <person name="Yao I."/>
            <person name="Hata Y."/>
            <person name="Hirao K."/>
            <person name="Deguchi M."/>
            <person name="Ide N."/>
            <person name="Takeuchi M."/>
            <person name="Takai Y."/>
        </authorList>
    </citation>
    <scope>NUCLEOTIDE SEQUENCE [MRNA] (ISOFORMS 1 AND 3)</scope>
    <scope>INTERACTION WITH DLGAP1 AND DLG4</scope>
    <source>
        <tissue>Brain</tissue>
    </source>
</reference>
<reference key="2">
    <citation type="journal article" date="1999" name="Neuron">
        <title>Shank, a novel family of postsynaptic density proteins that binds to the NMDA receptor/PSD-95/GKAP complex and cortactin.</title>
        <authorList>
            <person name="Naisbitt S."/>
            <person name="Kim E."/>
            <person name="Tu J.C."/>
            <person name="Xiao B."/>
            <person name="Sala C."/>
            <person name="Valtschanoff J."/>
            <person name="Weinberg R.J."/>
            <person name="Worley P.F."/>
            <person name="Sheng M."/>
        </authorList>
    </citation>
    <scope>NUCLEOTIDE SEQUENCE [MRNA] (ISOFORM 4)</scope>
    <scope>INTERACTION WITH DLGAP1</scope>
    <source>
        <strain>Sprague-Dawley</strain>
    </source>
</reference>
<reference key="3">
    <citation type="journal article" date="2000" name="J. Biol. Chem.">
        <title>The G protein-coupled receptor CL1 interacts directly with proteins of the Shank family.</title>
        <authorList>
            <person name="Tobaben S."/>
            <person name="Suedhof T.C."/>
            <person name="Stahl B."/>
        </authorList>
    </citation>
    <scope>NUCLEOTIDE SEQUENCE [MRNA] (ISOFORM 1)</scope>
    <source>
        <tissue>Brain</tissue>
    </source>
</reference>
<reference key="4">
    <citation type="journal article" date="1999" name="J. Biol. Chem.">
        <title>Characterization of the shank family of synaptic proteins. Multiple genes, alternative splicing, and differential expression in brain and development.</title>
        <authorList>
            <person name="Lim S."/>
            <person name="Naisbitt S."/>
            <person name="Yoon J."/>
            <person name="Hwang J.-I."/>
            <person name="Suh P.-G."/>
            <person name="Sheng M."/>
            <person name="Kim E."/>
        </authorList>
    </citation>
    <scope>PARTIAL NUCLEOTIDE SEQUENCE (ISOFORMS 1; 2; 3; 4 AND 5)</scope>
    <scope>DEVELOPMENTAL STAGE</scope>
    <source>
        <tissue>Brain</tissue>
    </source>
</reference>
<reference key="5">
    <citation type="journal article" date="1999" name="J. Biol. Chem.">
        <title>Somatostatin receptor interacting protein defines a novel family of multidomain proteins present in human and rodent brain.</title>
        <authorList>
            <person name="Zitzer H."/>
            <person name="Hoenck H.-H."/>
            <person name="Baechner D."/>
            <person name="Richter D."/>
            <person name="Kreienkamp H.-J."/>
        </authorList>
    </citation>
    <scope>PARTIAL NUCLEOTIDE SEQUENCE (ISOFORM 4)</scope>
    <source>
        <tissue>Brain</tissue>
    </source>
</reference>
<reference key="6">
    <citation type="journal article" date="1999" name="Neuron">
        <title>Coupling of mGluR/Homer and PSD-95 complexes by the Shank family of postsynaptic density proteins.</title>
        <authorList>
            <person name="Tu J.C."/>
            <person name="Xiao B."/>
            <person name="Naisbitt S."/>
            <person name="Yuan J.P."/>
            <person name="Petralia R.S."/>
            <person name="Brakeman P."/>
            <person name="Doan A."/>
            <person name="Aakalu V.K."/>
            <person name="Lanahan A.A."/>
            <person name="Sheng M."/>
            <person name="Worley P.F."/>
        </authorList>
    </citation>
    <scope>INTERACTION WITH HOMER1</scope>
    <scope>SUBCELLULAR LOCATION</scope>
</reference>
<reference key="7">
    <citation type="journal article" date="2001" name="J. Biol. Chem.">
        <title>Synaptic scaffolding proteins in rat brain. Ankyrin repeats of the multidomain Shank protein family interact with the cytoskeletal protein alpha-fodrin.</title>
        <authorList>
            <person name="Bockers T.M."/>
            <person name="Mameza M.G."/>
            <person name="Kreutz M.R."/>
            <person name="Bockmann J."/>
            <person name="Weise C."/>
            <person name="Buck F."/>
            <person name="Richter D."/>
            <person name="Gundelfinger E.D."/>
            <person name="Kreienkamp H.-J."/>
        </authorList>
    </citation>
    <scope>INTERACTION WITH SPTAN1</scope>
</reference>
<reference key="8">
    <citation type="journal article" date="2001" name="Mol. Cell. Neurosci.">
        <title>Sharpin, a novel postsynaptic density protein that directly interacts with the shank family of proteins.</title>
        <authorList>
            <person name="Lim S."/>
            <person name="Sala C."/>
            <person name="Yoon J."/>
            <person name="Park S."/>
            <person name="Kuroda S."/>
            <person name="Sheng M."/>
            <person name="Kim E."/>
        </authorList>
    </citation>
    <scope>INTERACTION WITH SHARPIN</scope>
</reference>
<reference key="9">
    <citation type="journal article" date="2001" name="Neuron">
        <title>Regulation of dendritic spine morphology and synaptic function by Shank and Homer.</title>
        <authorList>
            <person name="Sala C."/>
            <person name="Piech V."/>
            <person name="Wilson N.R."/>
            <person name="Passafaro M."/>
            <person name="Liu G."/>
            <person name="Sheng M."/>
        </authorList>
    </citation>
    <scope>FUNCTION</scope>
</reference>
<reference key="10">
    <citation type="journal article" date="2000" name="J. Cell Sci.">
        <title>The Shank family of scaffold proteins.</title>
        <authorList>
            <person name="Sheng M."/>
            <person name="Kim E."/>
        </authorList>
    </citation>
    <scope>REVIEW</scope>
</reference>
<reference key="11">
    <citation type="journal article" date="2004" name="Proc. Natl. Acad. Sci. U.S.A.">
        <title>The immunoglobulin family member dendrite arborization and synapse maturation 1 (Dasm1) controls excitatory synapse maturation.</title>
        <authorList>
            <person name="Shi S.-H."/>
            <person name="Cheng T."/>
            <person name="Jan L.Y."/>
            <person name="Jan Y.-N."/>
        </authorList>
    </citation>
    <scope>INTERACTION WITH IGSF9</scope>
</reference>
<reference key="12">
    <citation type="journal article" date="2008" name="Mol. Biol. Cell">
        <title>Paralemmin-1, a modulator of filopodia induction is required for spine maturation.</title>
        <authorList>
            <person name="Arstikaitis P."/>
            <person name="Gauthier-Campbell C."/>
            <person name="Carolina Gutierrez Herrera R."/>
            <person name="Huang K."/>
            <person name="Levinson J.N."/>
            <person name="Murphy T.H."/>
            <person name="Kilimann M.W."/>
            <person name="Sala C."/>
            <person name="Colicos M.A."/>
            <person name="El-Husseini A."/>
        </authorList>
    </citation>
    <scope>FUNCTION</scope>
</reference>
<reference key="13">
    <citation type="journal article" date="2009" name="Cell">
        <title>The postsynaptic density proteins Homer and Shank form a polymeric network structure.</title>
        <authorList>
            <person name="Hayashi M.K."/>
            <person name="Tang C."/>
            <person name="Verpelli C."/>
            <person name="Narayanan R."/>
            <person name="Stearns M.H."/>
            <person name="Xu R.M."/>
            <person name="Li H."/>
            <person name="Sala C."/>
            <person name="Hayashi Y."/>
        </authorList>
    </citation>
    <scope>INTERACTION WITH HOMER1 AND HOMER3</scope>
</reference>
<reference key="14">
    <citation type="journal article" date="2012" name="Nat. Commun.">
        <title>Quantitative maps of protein phosphorylation sites across 14 different rat organs and tissues.</title>
        <authorList>
            <person name="Lundby A."/>
            <person name="Secher A."/>
            <person name="Lage K."/>
            <person name="Nordsborg N.B."/>
            <person name="Dmytriyev A."/>
            <person name="Lundby C."/>
            <person name="Olsen J.V."/>
        </authorList>
    </citation>
    <scope>PHOSPHORYLATION [LARGE SCALE ANALYSIS] AT SER-540; SER-898; SER-1291 AND SER-1442</scope>
    <scope>PHOSPHORYLATION [LARGE SCALE ANALYSIS] AT SER-638 AND SER-641 (ISOFORM 3)</scope>
    <scope>IDENTIFICATION BY MASS SPECTROMETRY [LARGE SCALE ANALYSIS]</scope>
</reference>
<reference key="15">
    <citation type="journal article" date="2003" name="J. Biol. Chem.">
        <title>Crystal structure of the Shank PDZ-ligand complex reveals a class I PDZ interaction and a novel PDZ-PDZ dimerization.</title>
        <authorList>
            <person name="Im Y.J."/>
            <person name="Lee J.H."/>
            <person name="Park S.H."/>
            <person name="Park S.J."/>
            <person name="Rho S.-H."/>
            <person name="Kang G.B."/>
            <person name="Kim E."/>
            <person name="Eom S.H."/>
        </authorList>
    </citation>
    <scope>X-RAY CRYSTALLOGRAPHY (1.8 ANGSTROMS) OF 654-762 IN COMPLEX WITH DLGAP1</scope>
    <scope>SUBUNIT</scope>
</reference>
<keyword id="KW-0002">3D-structure</keyword>
<keyword id="KW-0025">Alternative splicing</keyword>
<keyword id="KW-0040">ANK repeat</keyword>
<keyword id="KW-0963">Cytoplasm</keyword>
<keyword id="KW-0221">Differentiation</keyword>
<keyword id="KW-0488">Methylation</keyword>
<keyword id="KW-0524">Neurogenesis</keyword>
<keyword id="KW-0597">Phosphoprotein</keyword>
<keyword id="KW-1185">Reference proteome</keyword>
<keyword id="KW-0677">Repeat</keyword>
<keyword id="KW-0728">SH3 domain</keyword>
<keyword id="KW-0770">Synapse</keyword>
<protein>
    <recommendedName>
        <fullName>SH3 and multiple ankyrin repeat domains protein 1</fullName>
        <shortName>Shank1</shortName>
    </recommendedName>
    <alternativeName>
        <fullName>GKAP/SAPAP-interacting protein</fullName>
    </alternativeName>
    <alternativeName>
        <fullName>SPANK-1</fullName>
    </alternativeName>
    <alternativeName>
        <fullName>Somatostatin receptor-interacting protein</fullName>
        <shortName>SSTR-interacting protein</shortName>
        <shortName>SSTRIP</shortName>
    </alternativeName>
    <alternativeName>
        <fullName>Synamon</fullName>
    </alternativeName>
</protein>
<name>SHAN1_RAT</name>